<comment type="subcellular location">
    <subcellularLocation>
        <location evidence="1">Cell membrane</location>
        <topology evidence="1">Lipid-anchor</topology>
    </subcellularLocation>
</comment>
<comment type="similarity">
    <text evidence="1">Belongs to the LpqB lipoprotein family.</text>
</comment>
<accession>Q6A830</accession>
<gene>
    <name evidence="1" type="primary">lpqB</name>
    <name type="ordered locus">PPA1336</name>
</gene>
<proteinExistence type="inferred from homology"/>
<evidence type="ECO:0000255" key="1">
    <source>
        <dbReference type="HAMAP-Rule" id="MF_01373"/>
    </source>
</evidence>
<sequence length="591" mass="62142">MTLRPSRRAVLSAAAVLLTGCSEVPSQGPVKRADGPRAAAQESIDVAPHPPADGASIDLVVGGFLQAMASARDDYRVARSYLTSDIADRWDPHAKVTIYDATNHKPASTVATAALQAPVVGQIDSRGHYHPTSSQTLNHDFGMAQESGQWRISRPPEGVLISQYTFQRSWSTIPIYFLTEAADRLVPDVIHLPSAAADPDAALRAMTAGVPKPLDAVLRTALPDGVTVTGTTSVDAVGVVTVPLSASAAQLSPSQRRLLASQVTWTLNGFAAISRVRFTAGGSLLSLPEAAEDQTVSADLYAEFIPLPATHSPTVVAVIKGQMGRVAASGHNFQIMPGALGREATTNNSVAEVASTQLTMPMISPRSPGAVWHAVSADRRSLLTWQEGSEDIQVLATGVNLLRPQVLGDHSIMTFSDTDPTLIVIGSDGTRMSTVVDLGGRRVRSFSVAPDAVQVALVLERGKTRALGIGLLSRQEGAVHLSHIADIPLSSSDVNLSIITDVAWLSQTRLCVLGRAIDAGVTTPYEIAVDGSGATSMGQLTATSMAAVVALPKETGTEAVVLSEDGILLRHEDSFRWRQILQGVSAVAVTA</sequence>
<name>LPQB_CUTAK</name>
<organism>
    <name type="scientific">Cutibacterium acnes (strain DSM 16379 / KPA171202)</name>
    <name type="common">Propionibacterium acnes</name>
    <dbReference type="NCBI Taxonomy" id="267747"/>
    <lineage>
        <taxon>Bacteria</taxon>
        <taxon>Bacillati</taxon>
        <taxon>Actinomycetota</taxon>
        <taxon>Actinomycetes</taxon>
        <taxon>Propionibacteriales</taxon>
        <taxon>Propionibacteriaceae</taxon>
        <taxon>Cutibacterium</taxon>
    </lineage>
</organism>
<reference key="1">
    <citation type="journal article" date="2004" name="Science">
        <title>The complete genome sequence of Propionibacterium acnes, a commensal of human skin.</title>
        <authorList>
            <person name="Brueggemann H."/>
            <person name="Henne A."/>
            <person name="Hoster F."/>
            <person name="Liesegang H."/>
            <person name="Wiezer A."/>
            <person name="Strittmatter A."/>
            <person name="Hujer S."/>
            <person name="Duerre P."/>
            <person name="Gottschalk G."/>
        </authorList>
    </citation>
    <scope>NUCLEOTIDE SEQUENCE [LARGE SCALE GENOMIC DNA]</scope>
    <source>
        <strain>DSM 16379 / KPA171202</strain>
    </source>
</reference>
<feature type="signal peptide" evidence="1">
    <location>
        <begin position="1"/>
        <end position="20"/>
    </location>
</feature>
<feature type="chain" id="PRO_0000286727" description="Lipoprotein LpqB">
    <location>
        <begin position="21"/>
        <end position="591"/>
    </location>
</feature>
<feature type="lipid moiety-binding region" description="N-palmitoyl cysteine" evidence="1">
    <location>
        <position position="21"/>
    </location>
</feature>
<feature type="lipid moiety-binding region" description="S-diacylglycerol cysteine" evidence="1">
    <location>
        <position position="21"/>
    </location>
</feature>
<protein>
    <recommendedName>
        <fullName evidence="1">Lipoprotein LpqB</fullName>
    </recommendedName>
</protein>
<dbReference type="EMBL" id="AE017283">
    <property type="protein sequence ID" value="AAT83085.1"/>
    <property type="molecule type" value="Genomic_DNA"/>
</dbReference>
<dbReference type="SMR" id="Q6A830"/>
<dbReference type="EnsemblBacteria" id="AAT83085">
    <property type="protein sequence ID" value="AAT83085"/>
    <property type="gene ID" value="PPA1336"/>
</dbReference>
<dbReference type="KEGG" id="pac:PPA1336"/>
<dbReference type="eggNOG" id="COG5401">
    <property type="taxonomic scope" value="Bacteria"/>
</dbReference>
<dbReference type="HOGENOM" id="CLU_032207_0_0_11"/>
<dbReference type="Proteomes" id="UP000000603">
    <property type="component" value="Chromosome"/>
</dbReference>
<dbReference type="GO" id="GO:0005886">
    <property type="term" value="C:plasma membrane"/>
    <property type="evidence" value="ECO:0007669"/>
    <property type="project" value="UniProtKB-SubCell"/>
</dbReference>
<dbReference type="HAMAP" id="MF_01373">
    <property type="entry name" value="LpqB_lipoprot"/>
    <property type="match status" value="1"/>
</dbReference>
<dbReference type="InterPro" id="IPR019606">
    <property type="entry name" value="GerMN"/>
</dbReference>
<dbReference type="InterPro" id="IPR023959">
    <property type="entry name" value="Lipoprotein_LpqB"/>
</dbReference>
<dbReference type="Pfam" id="PF10646">
    <property type="entry name" value="Germane"/>
    <property type="match status" value="1"/>
</dbReference>
<dbReference type="SMART" id="SM00909">
    <property type="entry name" value="Germane"/>
    <property type="match status" value="1"/>
</dbReference>
<keyword id="KW-1003">Cell membrane</keyword>
<keyword id="KW-0449">Lipoprotein</keyword>
<keyword id="KW-0472">Membrane</keyword>
<keyword id="KW-0564">Palmitate</keyword>
<keyword id="KW-0732">Signal</keyword>